<gene>
    <name evidence="1" type="primary">htpG</name>
    <name type="ordered locus">CLB_1925</name>
</gene>
<dbReference type="EMBL" id="CP000726">
    <property type="protein sequence ID" value="ABS34477.1"/>
    <property type="molecule type" value="Genomic_DNA"/>
</dbReference>
<dbReference type="RefSeq" id="WP_011986521.1">
    <property type="nucleotide sequence ID" value="NC_009697.1"/>
</dbReference>
<dbReference type="SMR" id="A7FV42"/>
<dbReference type="GeneID" id="5186240"/>
<dbReference type="KEGG" id="cba:CLB_1925"/>
<dbReference type="HOGENOM" id="CLU_006684_3_0_9"/>
<dbReference type="GO" id="GO:0005737">
    <property type="term" value="C:cytoplasm"/>
    <property type="evidence" value="ECO:0007669"/>
    <property type="project" value="UniProtKB-SubCell"/>
</dbReference>
<dbReference type="GO" id="GO:0005524">
    <property type="term" value="F:ATP binding"/>
    <property type="evidence" value="ECO:0007669"/>
    <property type="project" value="UniProtKB-UniRule"/>
</dbReference>
<dbReference type="GO" id="GO:0016887">
    <property type="term" value="F:ATP hydrolysis activity"/>
    <property type="evidence" value="ECO:0007669"/>
    <property type="project" value="InterPro"/>
</dbReference>
<dbReference type="GO" id="GO:0140662">
    <property type="term" value="F:ATP-dependent protein folding chaperone"/>
    <property type="evidence" value="ECO:0007669"/>
    <property type="project" value="InterPro"/>
</dbReference>
<dbReference type="GO" id="GO:0051082">
    <property type="term" value="F:unfolded protein binding"/>
    <property type="evidence" value="ECO:0007669"/>
    <property type="project" value="UniProtKB-UniRule"/>
</dbReference>
<dbReference type="CDD" id="cd16927">
    <property type="entry name" value="HATPase_Hsp90-like"/>
    <property type="match status" value="1"/>
</dbReference>
<dbReference type="FunFam" id="1.20.120.790:FF:000006">
    <property type="entry name" value="Chaperone protein HtpG"/>
    <property type="match status" value="1"/>
</dbReference>
<dbReference type="FunFam" id="3.40.50.11260:FF:000008">
    <property type="entry name" value="Chaperone protein HtpG"/>
    <property type="match status" value="1"/>
</dbReference>
<dbReference type="FunFam" id="3.30.565.10:FF:000054">
    <property type="entry name" value="Heat shock protein 90"/>
    <property type="match status" value="1"/>
</dbReference>
<dbReference type="FunFam" id="3.30.230.80:FF:000002">
    <property type="entry name" value="Molecular chaperone HtpG"/>
    <property type="match status" value="1"/>
</dbReference>
<dbReference type="Gene3D" id="3.30.230.80">
    <property type="match status" value="1"/>
</dbReference>
<dbReference type="Gene3D" id="3.40.50.11260">
    <property type="match status" value="1"/>
</dbReference>
<dbReference type="Gene3D" id="1.20.120.790">
    <property type="entry name" value="Heat shock protein 90, C-terminal domain"/>
    <property type="match status" value="1"/>
</dbReference>
<dbReference type="Gene3D" id="3.30.565.10">
    <property type="entry name" value="Histidine kinase-like ATPase, C-terminal domain"/>
    <property type="match status" value="1"/>
</dbReference>
<dbReference type="HAMAP" id="MF_00505">
    <property type="entry name" value="HSP90"/>
    <property type="match status" value="1"/>
</dbReference>
<dbReference type="InterPro" id="IPR036890">
    <property type="entry name" value="HATPase_C_sf"/>
</dbReference>
<dbReference type="InterPro" id="IPR019805">
    <property type="entry name" value="Heat_shock_protein_90_CS"/>
</dbReference>
<dbReference type="InterPro" id="IPR037196">
    <property type="entry name" value="HSP90_C"/>
</dbReference>
<dbReference type="InterPro" id="IPR001404">
    <property type="entry name" value="Hsp90_fam"/>
</dbReference>
<dbReference type="InterPro" id="IPR020575">
    <property type="entry name" value="Hsp90_N"/>
</dbReference>
<dbReference type="InterPro" id="IPR020568">
    <property type="entry name" value="Ribosomal_Su5_D2-typ_SF"/>
</dbReference>
<dbReference type="NCBIfam" id="NF003555">
    <property type="entry name" value="PRK05218.1"/>
    <property type="match status" value="1"/>
</dbReference>
<dbReference type="PANTHER" id="PTHR11528">
    <property type="entry name" value="HEAT SHOCK PROTEIN 90 FAMILY MEMBER"/>
    <property type="match status" value="1"/>
</dbReference>
<dbReference type="Pfam" id="PF13589">
    <property type="entry name" value="HATPase_c_3"/>
    <property type="match status" value="1"/>
</dbReference>
<dbReference type="Pfam" id="PF00183">
    <property type="entry name" value="HSP90"/>
    <property type="match status" value="2"/>
</dbReference>
<dbReference type="PIRSF" id="PIRSF002583">
    <property type="entry name" value="Hsp90"/>
    <property type="match status" value="1"/>
</dbReference>
<dbReference type="PRINTS" id="PR00775">
    <property type="entry name" value="HEATSHOCK90"/>
</dbReference>
<dbReference type="SUPFAM" id="SSF55874">
    <property type="entry name" value="ATPase domain of HSP90 chaperone/DNA topoisomerase II/histidine kinase"/>
    <property type="match status" value="1"/>
</dbReference>
<dbReference type="SUPFAM" id="SSF110942">
    <property type="entry name" value="HSP90 C-terminal domain"/>
    <property type="match status" value="1"/>
</dbReference>
<dbReference type="SUPFAM" id="SSF54211">
    <property type="entry name" value="Ribosomal protein S5 domain 2-like"/>
    <property type="match status" value="1"/>
</dbReference>
<dbReference type="PROSITE" id="PS00298">
    <property type="entry name" value="HSP90"/>
    <property type="match status" value="1"/>
</dbReference>
<organism>
    <name type="scientific">Clostridium botulinum (strain ATCC 19397 / Type A)</name>
    <dbReference type="NCBI Taxonomy" id="441770"/>
    <lineage>
        <taxon>Bacteria</taxon>
        <taxon>Bacillati</taxon>
        <taxon>Bacillota</taxon>
        <taxon>Clostridia</taxon>
        <taxon>Eubacteriales</taxon>
        <taxon>Clostridiaceae</taxon>
        <taxon>Clostridium</taxon>
    </lineage>
</organism>
<name>HTPG_CLOB1</name>
<accession>A7FV42</accession>
<reference key="1">
    <citation type="journal article" date="2007" name="PLoS ONE">
        <title>Analysis of the neurotoxin complex genes in Clostridium botulinum A1-A4 and B1 strains: BoNT/A3, /Ba4 and /B1 clusters are located within plasmids.</title>
        <authorList>
            <person name="Smith T.J."/>
            <person name="Hill K.K."/>
            <person name="Foley B.T."/>
            <person name="Detter J.C."/>
            <person name="Munk A.C."/>
            <person name="Bruce D.C."/>
            <person name="Doggett N.A."/>
            <person name="Smith L.A."/>
            <person name="Marks J.D."/>
            <person name="Xie G."/>
            <person name="Brettin T.S."/>
        </authorList>
    </citation>
    <scope>NUCLEOTIDE SEQUENCE [LARGE SCALE GENOMIC DNA]</scope>
    <source>
        <strain>ATCC 19397 / Type A</strain>
    </source>
</reference>
<proteinExistence type="inferred from homology"/>
<keyword id="KW-0067">ATP-binding</keyword>
<keyword id="KW-0143">Chaperone</keyword>
<keyword id="KW-0963">Cytoplasm</keyword>
<keyword id="KW-0547">Nucleotide-binding</keyword>
<keyword id="KW-0346">Stress response</keyword>
<sequence length="626" mass="72853">METKQFKAESKRLLDLMINSIYTHKEIFLRELISNSSDAIDKIYYKTLTDDSLKFERDNYYIRVVSDKENRILKIADTGIGMTKEELENNLGVIAKSGSLQFKKENEVKEGYDIIGQFGVGFYSAFLVSDDVTVISKAFGSNEAYKWNSKGAEGYTIEPCEKETYGTEIILKIKDNTEEENYDEFLEEYTLKSIIKKYSDFIRYPIKMDLTKTKPKEDNKEEFEEYKEEETINSMVPIWRKNKNELKAEDYENFYAEKHYGFDKPIKYIHTSVDGVVSYNAILFIPETTPYDFYTKEYEKGLELYSSGVLIMNKCGDLLPDYFGFVKGIVDSEDLSLNISREILQHDRQLKLIAKNIKTKIKNELESLLKKERDKYEKFYESFGRQLKYGVYSDFGSNKDILQDLLMFYSSKEKKMVTLAEYVSRMPEDQKYIYYAVGESNERIEKLPQIEGVLDKGYEVLYFTDDIDEFAIKMLMSYKEKEFKSVSSGDLGIEGEEKENTSNSDDKENKELFESMKDMLSGKVKDVRASKRLKNHPVCLANEGELSIEMEKVLNAMPNNQNIKADKVLEININHDVFKSLKEAYEGDKEKLKLYTDLLYNQALLIEGLAINDPVEFTNNICKIMK</sequence>
<evidence type="ECO:0000255" key="1">
    <source>
        <dbReference type="HAMAP-Rule" id="MF_00505"/>
    </source>
</evidence>
<evidence type="ECO:0000256" key="2">
    <source>
        <dbReference type="SAM" id="MobiDB-lite"/>
    </source>
</evidence>
<protein>
    <recommendedName>
        <fullName evidence="1">Chaperone protein HtpG</fullName>
    </recommendedName>
    <alternativeName>
        <fullName evidence="1">Heat shock protein HtpG</fullName>
    </alternativeName>
    <alternativeName>
        <fullName evidence="1">High temperature protein G</fullName>
    </alternativeName>
</protein>
<feature type="chain" id="PRO_1000014911" description="Chaperone protein HtpG">
    <location>
        <begin position="1"/>
        <end position="626"/>
    </location>
</feature>
<feature type="region of interest" description="A; substrate-binding" evidence="1">
    <location>
        <begin position="1"/>
        <end position="341"/>
    </location>
</feature>
<feature type="region of interest" description="B" evidence="1">
    <location>
        <begin position="342"/>
        <end position="552"/>
    </location>
</feature>
<feature type="region of interest" description="Disordered" evidence="2">
    <location>
        <begin position="490"/>
        <end position="509"/>
    </location>
</feature>
<feature type="region of interest" description="C" evidence="1">
    <location>
        <begin position="553"/>
        <end position="626"/>
    </location>
</feature>
<feature type="compositionally biased region" description="Basic and acidic residues" evidence="2">
    <location>
        <begin position="498"/>
        <end position="509"/>
    </location>
</feature>
<comment type="function">
    <text evidence="1">Molecular chaperone. Has ATPase activity.</text>
</comment>
<comment type="subunit">
    <text evidence="1">Homodimer.</text>
</comment>
<comment type="subcellular location">
    <subcellularLocation>
        <location evidence="1">Cytoplasm</location>
    </subcellularLocation>
</comment>
<comment type="similarity">
    <text evidence="1">Belongs to the heat shock protein 90 family.</text>
</comment>